<evidence type="ECO:0000250" key="1"/>
<evidence type="ECO:0000250" key="2">
    <source>
        <dbReference type="UniProtKB" id="P07240"/>
    </source>
</evidence>
<evidence type="ECO:0000255" key="3"/>
<evidence type="ECO:0000305" key="4"/>
<accession>P20497</accession>
<proteinExistence type="evidence at transcript level"/>
<feature type="chain" id="PRO_0000099206" description="Envelope protein H3">
    <location>
        <begin position="1"/>
        <end position="324"/>
    </location>
</feature>
<feature type="topological domain" description="Virion surface" evidence="3">
    <location>
        <begin position="1"/>
        <end position="284"/>
    </location>
</feature>
<feature type="transmembrane region" description="Helical; Signal-anchor" evidence="1">
    <location>
        <begin position="285"/>
        <end position="305"/>
    </location>
</feature>
<feature type="topological domain" description="Intravirion" evidence="3">
    <location>
        <begin position="306"/>
        <end position="324"/>
    </location>
</feature>
<name>PG108_VACCC</name>
<gene>
    <name type="primary">OPG108</name>
    <name type="ORF">H3L</name>
</gene>
<sequence>MAAVKTPVIVVPVIDRPPSETFPNVHEHINDQKFDDVKDNEVMPEKRNVVVVKDDPDHYKDYAFIQWTGGNIRNDDKYTHFFSGFCNTMCTEETKRNIARHLALWDSNFFTELENKKVEYVVIVENDNVIEDITFLRPVLKAMHDKKIDILQMREIITGNKVKTELVMDKNHTIFTYTGGYDVSLSAYIIRVTTALNIVDEIIKSGGLSSGFYFEIARIENEMKINRQILDNAAKYVEHDPRLVAEHRFENMKPNFWSRIGTAAAKRYPGVMYAFTTPLISFFGLFDINVIGLIVILFIMFMLIFNVKSKLLWFLTGTFVTAFI</sequence>
<dbReference type="EMBL" id="M35027">
    <property type="protein sequence ID" value="AAA48090.1"/>
    <property type="molecule type" value="Genomic_DNA"/>
</dbReference>
<dbReference type="PIR" id="C42514">
    <property type="entry name" value="C42514"/>
</dbReference>
<dbReference type="SMR" id="P20497"/>
<dbReference type="ABCD" id="P20497">
    <property type="antibodies" value="7 sequenced antibodies"/>
</dbReference>
<dbReference type="Proteomes" id="UP000008269">
    <property type="component" value="Segment"/>
</dbReference>
<dbReference type="GO" id="GO:0016020">
    <property type="term" value="C:membrane"/>
    <property type="evidence" value="ECO:0007669"/>
    <property type="project" value="UniProtKB-KW"/>
</dbReference>
<dbReference type="GO" id="GO:0019031">
    <property type="term" value="C:viral envelope"/>
    <property type="evidence" value="ECO:0007669"/>
    <property type="project" value="UniProtKB-KW"/>
</dbReference>
<dbReference type="GO" id="GO:0055036">
    <property type="term" value="C:virion membrane"/>
    <property type="evidence" value="ECO:0007669"/>
    <property type="project" value="UniProtKB-SubCell"/>
</dbReference>
<dbReference type="GO" id="GO:0046718">
    <property type="term" value="P:symbiont entry into host cell"/>
    <property type="evidence" value="ECO:0007669"/>
    <property type="project" value="UniProtKB-KW"/>
</dbReference>
<dbReference type="GO" id="GO:0019062">
    <property type="term" value="P:virion attachment to host cell"/>
    <property type="evidence" value="ECO:0007669"/>
    <property type="project" value="UniProtKB-KW"/>
</dbReference>
<dbReference type="InterPro" id="IPR004900">
    <property type="entry name" value="Poxvirus_P35"/>
</dbReference>
<dbReference type="Pfam" id="PF03213">
    <property type="entry name" value="Pox_P35"/>
    <property type="match status" value="1"/>
</dbReference>
<comment type="function">
    <text evidence="1 2">Envelope protein that binds to heparan sulfate on the cell surface and might provide virion attachment to target cell.</text>
</comment>
<comment type="subcellular location">
    <subcellularLocation>
        <location evidence="2">Virion membrane</location>
        <topology evidence="2">Single-pass membrane protein</topology>
    </subcellularLocation>
    <text evidence="2">Component of the mature virion (MV) membrane. Becomes membrane associated presumably during virus maturation. The mature virion is located in the cytoplasm of infected cells and is probably released by cell lysis.</text>
</comment>
<comment type="induction">
    <text>Expressed in the late phase of the viral replicative cycle.</text>
</comment>
<comment type="PTM">
    <text evidence="2">Does not contain disulfide bonds.</text>
</comment>
<comment type="miscellaneous">
    <text evidence="1">Immunodominant protein.</text>
</comment>
<comment type="similarity">
    <text evidence="4">Belongs to the orthopoxvirus OPG108 family.</text>
</comment>
<organismHost>
    <name type="scientific">Homo sapiens</name>
    <name type="common">Human</name>
    <dbReference type="NCBI Taxonomy" id="9606"/>
</organismHost>
<organism>
    <name type="scientific">Vaccinia virus (strain Copenhagen)</name>
    <name type="common">VACV</name>
    <dbReference type="NCBI Taxonomy" id="10249"/>
    <lineage>
        <taxon>Viruses</taxon>
        <taxon>Varidnaviria</taxon>
        <taxon>Bamfordvirae</taxon>
        <taxon>Nucleocytoviricota</taxon>
        <taxon>Pokkesviricetes</taxon>
        <taxon>Chitovirales</taxon>
        <taxon>Poxviridae</taxon>
        <taxon>Chordopoxvirinae</taxon>
        <taxon>Orthopoxvirus</taxon>
        <taxon>Vaccinia virus</taxon>
    </lineage>
</organism>
<reference key="1">
    <citation type="journal article" date="1990" name="Virology">
        <title>The complete DNA sequence of vaccinia virus.</title>
        <authorList>
            <person name="Goebel S.J."/>
            <person name="Johnson G.P."/>
            <person name="Perkus M.E."/>
            <person name="Davis S.W."/>
            <person name="Winslow J.P."/>
            <person name="Paoletti E."/>
        </authorList>
    </citation>
    <scope>NUCLEOTIDE SEQUENCE [LARGE SCALE GENOMIC DNA]</scope>
</reference>
<reference key="2">
    <citation type="journal article" date="1990" name="Virology">
        <title>Appendix to 'The complete DNA sequence of vaccinia virus'.</title>
        <authorList>
            <person name="Goebel S.J."/>
            <person name="Johnson G.P."/>
            <person name="Perkus M.E."/>
            <person name="Davis S.W."/>
            <person name="Winslow J.P."/>
            <person name="Paoletti E."/>
        </authorList>
    </citation>
    <scope>NUCLEOTIDE SEQUENCE [LARGE SCALE GENOMIC DNA]</scope>
</reference>
<protein>
    <recommendedName>
        <fullName>Envelope protein H3</fullName>
    </recommendedName>
    <alternativeName>
        <fullName>Ag35</fullName>
    </alternativeName>
    <alternativeName>
        <fullName>Virion envelope protein p35</fullName>
    </alternativeName>
</protein>
<keyword id="KW-0945">Host-virus interaction</keyword>
<keyword id="KW-0426">Late protein</keyword>
<keyword id="KW-0472">Membrane</keyword>
<keyword id="KW-1185">Reference proteome</keyword>
<keyword id="KW-0735">Signal-anchor</keyword>
<keyword id="KW-0812">Transmembrane</keyword>
<keyword id="KW-1133">Transmembrane helix</keyword>
<keyword id="KW-1161">Viral attachment to host cell</keyword>
<keyword id="KW-0261">Viral envelope protein</keyword>
<keyword id="KW-0946">Virion</keyword>
<keyword id="KW-1160">Virus entry into host cell</keyword>